<comment type="function">
    <text evidence="1">Cytokine that acts as a physiological ligand for receptor tyrosine kinases LTK and ALK, leading to their activation. Cytokine-binding is sufficient to activate LTK. In contrast, ALKAL2-driven activation of ALK is coupled with heparin-binding to ALK. Stimulation of ALK signaling is involved in neural development and regulation of energy expenditure.</text>
</comment>
<comment type="subunit">
    <text evidence="1">Homodimer.</text>
</comment>
<comment type="subcellular location">
    <subcellularLocation>
        <location evidence="1">Secreted</location>
    </subcellularLocation>
    <subcellularLocation>
        <location evidence="1">Cell membrane</location>
    </subcellularLocation>
    <text evidence="1">Following interaction with receptor tyrosine kinase ALK, associates with the cell membrane, membrane-binding is required to activate ALK.</text>
</comment>
<comment type="similarity">
    <text evidence="3">Belongs to the ALKAL family.</text>
</comment>
<protein>
    <recommendedName>
        <fullName>ALK and LTK ligand 2</fullName>
    </recommendedName>
</protein>
<dbReference type="EMBL" id="CH473947">
    <property type="protein sequence ID" value="EDM03239.1"/>
    <property type="molecule type" value="Genomic_DNA"/>
</dbReference>
<dbReference type="EMBL" id="BC167018">
    <property type="protein sequence ID" value="AAI67018.1"/>
    <property type="molecule type" value="mRNA"/>
</dbReference>
<dbReference type="RefSeq" id="NP_001102842.1">
    <property type="nucleotide sequence ID" value="NM_001109372.1"/>
</dbReference>
<dbReference type="SMR" id="B2RZ42"/>
<dbReference type="FunCoup" id="B2RZ42">
    <property type="interactions" value="342"/>
</dbReference>
<dbReference type="STRING" id="10116.ENSRNOP00000006921"/>
<dbReference type="PaxDb" id="10116-ENSRNOP00000006921"/>
<dbReference type="Ensembl" id="ENSRNOT00000006921.6">
    <property type="protein sequence ID" value="ENSRNOP00000006921.4"/>
    <property type="gene ID" value="ENSRNOG00000005154.7"/>
</dbReference>
<dbReference type="GeneID" id="679566"/>
<dbReference type="KEGG" id="rno:679566"/>
<dbReference type="UCSC" id="RGD:1587117">
    <property type="organism name" value="rat"/>
</dbReference>
<dbReference type="AGR" id="RGD:1587117"/>
<dbReference type="CTD" id="285016"/>
<dbReference type="RGD" id="1587117">
    <property type="gene designation" value="Alkal2"/>
</dbReference>
<dbReference type="eggNOG" id="ENOG502S2JY">
    <property type="taxonomic scope" value="Eukaryota"/>
</dbReference>
<dbReference type="GeneTree" id="ENSGT00940000162505"/>
<dbReference type="HOGENOM" id="CLU_120534_0_0_1"/>
<dbReference type="InParanoid" id="B2RZ42"/>
<dbReference type="OMA" id="SPMCMER"/>
<dbReference type="OrthoDB" id="9807651at2759"/>
<dbReference type="PhylomeDB" id="B2RZ42"/>
<dbReference type="TreeFam" id="TF333390"/>
<dbReference type="Reactome" id="R-RNO-201556">
    <property type="pathway name" value="Signaling by ALK"/>
</dbReference>
<dbReference type="Reactome" id="R-RNO-9842663">
    <property type="pathway name" value="Signaling by LTK"/>
</dbReference>
<dbReference type="PRO" id="PR:B2RZ42"/>
<dbReference type="Proteomes" id="UP000002494">
    <property type="component" value="Chromosome 6"/>
</dbReference>
<dbReference type="Proteomes" id="UP000234681">
    <property type="component" value="Chromosome 6"/>
</dbReference>
<dbReference type="Bgee" id="ENSRNOG00000005154">
    <property type="expression patterns" value="Expressed in heart and 8 other cell types or tissues"/>
</dbReference>
<dbReference type="GO" id="GO:0005576">
    <property type="term" value="C:extracellular region"/>
    <property type="evidence" value="ECO:0000250"/>
    <property type="project" value="UniProtKB"/>
</dbReference>
<dbReference type="GO" id="GO:0005615">
    <property type="term" value="C:extracellular space"/>
    <property type="evidence" value="ECO:0000266"/>
    <property type="project" value="RGD"/>
</dbReference>
<dbReference type="GO" id="GO:0005886">
    <property type="term" value="C:plasma membrane"/>
    <property type="evidence" value="ECO:0007669"/>
    <property type="project" value="UniProtKB-SubCell"/>
</dbReference>
<dbReference type="GO" id="GO:0005125">
    <property type="term" value="F:cytokine activity"/>
    <property type="evidence" value="ECO:0000250"/>
    <property type="project" value="UniProtKB"/>
</dbReference>
<dbReference type="GO" id="GO:0030298">
    <property type="term" value="F:receptor signaling protein tyrosine kinase activator activity"/>
    <property type="evidence" value="ECO:0000250"/>
    <property type="project" value="UniProtKB"/>
</dbReference>
<dbReference type="GO" id="GO:0030971">
    <property type="term" value="F:receptor tyrosine kinase binding"/>
    <property type="evidence" value="ECO:0000266"/>
    <property type="project" value="RGD"/>
</dbReference>
<dbReference type="GO" id="GO:0030297">
    <property type="term" value="F:transmembrane receptor protein tyrosine kinase activator activity"/>
    <property type="evidence" value="ECO:0000266"/>
    <property type="project" value="RGD"/>
</dbReference>
<dbReference type="GO" id="GO:0007169">
    <property type="term" value="P:cell surface receptor protein tyrosine kinase signaling pathway"/>
    <property type="evidence" value="ECO:0000266"/>
    <property type="project" value="RGD"/>
</dbReference>
<dbReference type="GO" id="GO:0070374">
    <property type="term" value="P:positive regulation of ERK1 and ERK2 cascade"/>
    <property type="evidence" value="ECO:0000266"/>
    <property type="project" value="RGD"/>
</dbReference>
<dbReference type="GO" id="GO:0070378">
    <property type="term" value="P:positive regulation of ERK5 cascade"/>
    <property type="evidence" value="ECO:0000266"/>
    <property type="project" value="RGD"/>
</dbReference>
<dbReference type="GO" id="GO:0010976">
    <property type="term" value="P:positive regulation of neuron projection development"/>
    <property type="evidence" value="ECO:0000250"/>
    <property type="project" value="UniProtKB"/>
</dbReference>
<dbReference type="InterPro" id="IPR029364">
    <property type="entry name" value="ALKL1/2"/>
</dbReference>
<dbReference type="PANTHER" id="PTHR28676:SF2">
    <property type="entry name" value="ALK AND LTK LIGAND 2"/>
    <property type="match status" value="1"/>
</dbReference>
<dbReference type="PANTHER" id="PTHR28676">
    <property type="entry name" value="ALK AND LTK LIGAND 2-RELATED"/>
    <property type="match status" value="1"/>
</dbReference>
<dbReference type="Pfam" id="PF15129">
    <property type="entry name" value="ALKL1_2"/>
    <property type="match status" value="1"/>
</dbReference>
<feature type="signal peptide" evidence="2">
    <location>
        <begin position="1"/>
        <end position="25"/>
    </location>
</feature>
<feature type="chain" id="PRO_0000353121" description="ALK and LTK ligand 2">
    <location>
        <begin position="26"/>
        <end position="151"/>
    </location>
</feature>
<feature type="disulfide bond" evidence="1">
    <location>
        <begin position="112"/>
        <end position="148"/>
    </location>
</feature>
<feature type="disulfide bond" evidence="1">
    <location>
        <begin position="126"/>
        <end position="135"/>
    </location>
</feature>
<proteinExistence type="evidence at transcript level"/>
<evidence type="ECO:0000250" key="1">
    <source>
        <dbReference type="UniProtKB" id="Q6UX46"/>
    </source>
</evidence>
<evidence type="ECO:0000255" key="2"/>
<evidence type="ECO:0000305" key="3"/>
<evidence type="ECO:0000312" key="4">
    <source>
        <dbReference type="RGD" id="1587117"/>
    </source>
</evidence>
<accession>B2RZ42</accession>
<name>ALKL2_RAT</name>
<reference key="1">
    <citation type="submission" date="2005-07" db="EMBL/GenBank/DDBJ databases">
        <authorList>
            <person name="Mural R.J."/>
            <person name="Adams M.D."/>
            <person name="Myers E.W."/>
            <person name="Smith H.O."/>
            <person name="Venter J.C."/>
        </authorList>
    </citation>
    <scope>NUCLEOTIDE SEQUENCE [LARGE SCALE GENOMIC DNA]</scope>
    <source>
        <strain>Brown Norway</strain>
    </source>
</reference>
<reference key="2">
    <citation type="journal article" date="2004" name="Genome Res.">
        <title>The status, quality, and expansion of the NIH full-length cDNA project: the Mammalian Gene Collection (MGC).</title>
        <authorList>
            <consortium name="The MGC Project Team"/>
        </authorList>
    </citation>
    <scope>NUCLEOTIDE SEQUENCE [LARGE SCALE MRNA]</scope>
    <source>
        <tissue>Ovary</tissue>
    </source>
</reference>
<organism>
    <name type="scientific">Rattus norvegicus</name>
    <name type="common">Rat</name>
    <dbReference type="NCBI Taxonomy" id="10116"/>
    <lineage>
        <taxon>Eukaryota</taxon>
        <taxon>Metazoa</taxon>
        <taxon>Chordata</taxon>
        <taxon>Craniata</taxon>
        <taxon>Vertebrata</taxon>
        <taxon>Euteleostomi</taxon>
        <taxon>Mammalia</taxon>
        <taxon>Eutheria</taxon>
        <taxon>Euarchontoglires</taxon>
        <taxon>Glires</taxon>
        <taxon>Rodentia</taxon>
        <taxon>Myomorpha</taxon>
        <taxon>Muroidea</taxon>
        <taxon>Muridae</taxon>
        <taxon>Murinae</taxon>
        <taxon>Rattus</taxon>
    </lineage>
</organism>
<sequence>MRVSGRPMLLALLLLLSTVGDPGHAQPRGPADRQTLLRLLVELVQELKKFHIGDSKRLQLLGESDFALGRREATDYGADQEEQRVEIVPRDLRMKDKFLKHLTGPLYFSPKCSKHFHRLYHNTRDCTIPAYYKRCARLLTRLAVSPMCMER</sequence>
<keyword id="KW-1003">Cell membrane</keyword>
<keyword id="KW-0202">Cytokine</keyword>
<keyword id="KW-1015">Disulfide bond</keyword>
<keyword id="KW-0472">Membrane</keyword>
<keyword id="KW-1185">Reference proteome</keyword>
<keyword id="KW-0964">Secreted</keyword>
<keyword id="KW-0732">Signal</keyword>
<gene>
    <name evidence="4" type="primary">Alkal2</name>
</gene>